<name>MTBS_BPSPR</name>
<comment type="function">
    <text evidence="3 5">A methyltransferase that methylates the C-1 in the sequence 5'-GGCC-3' and both cytosines in the sequence 5'-CCGG-3' (Probable). A methyltransferase that methylates C-3 within the sequence 5'-GGCC-3', C-1 in 5'-CCGG-3' and C-2 in 5'-CCWGG-3'. Modification confers resistance against restriction enzymes that recognize these sequences (PubMed:12654995).</text>
</comment>
<comment type="catalytic activity">
    <reaction evidence="2">
        <text>a 2'-deoxycytidine in DNA + S-adenosyl-L-methionine = a 5-methyl-2'-deoxycytidine in DNA + S-adenosyl-L-homocysteine + H(+)</text>
        <dbReference type="Rhea" id="RHEA:13681"/>
        <dbReference type="Rhea" id="RHEA-COMP:11369"/>
        <dbReference type="Rhea" id="RHEA-COMP:11370"/>
        <dbReference type="ChEBI" id="CHEBI:15378"/>
        <dbReference type="ChEBI" id="CHEBI:57856"/>
        <dbReference type="ChEBI" id="CHEBI:59789"/>
        <dbReference type="ChEBI" id="CHEBI:85452"/>
        <dbReference type="ChEBI" id="CHEBI:85454"/>
        <dbReference type="EC" id="2.1.1.37"/>
    </reaction>
</comment>
<comment type="subunit">
    <text>Monomer.</text>
</comment>
<comment type="similarity">
    <text evidence="1">Belongs to the class I-like SAM-binding methyltransferase superfamily. C5-methyltransferase family.</text>
</comment>
<evidence type="ECO:0000255" key="1">
    <source>
        <dbReference type="PROSITE-ProRule" id="PRU01016"/>
    </source>
</evidence>
<evidence type="ECO:0000255" key="2">
    <source>
        <dbReference type="PROSITE-ProRule" id="PRU10018"/>
    </source>
</evidence>
<evidence type="ECO:0000303" key="3">
    <source>
    </source>
</evidence>
<evidence type="ECO:0000305" key="4"/>
<evidence type="ECO:0000305" key="5">
    <source>
    </source>
</evidence>
<organism>
    <name type="scientific">Bacillus phage SPR</name>
    <name type="common">Bacteriophage SPR</name>
    <dbReference type="NCBI Taxonomy" id="10725"/>
    <lineage>
        <taxon>Viruses</taxon>
        <taxon>Duplodnaviria</taxon>
        <taxon>Heunggongvirae</taxon>
        <taxon>Uroviricota</taxon>
        <taxon>Caudoviricetes</taxon>
        <taxon>Spbetavirus</taxon>
    </lineage>
</organism>
<accession>P00476</accession>
<dbReference type="EC" id="2.1.1.37"/>
<dbReference type="EMBL" id="K02124">
    <property type="protein sequence ID" value="AAA32604.1"/>
    <property type="molecule type" value="Genomic_DNA"/>
</dbReference>
<dbReference type="PIR" id="A91516">
    <property type="entry name" value="CTBPSR"/>
</dbReference>
<dbReference type="SMR" id="P00476"/>
<dbReference type="REBASE" id="2834">
    <property type="entry name" value="M.SPRI"/>
</dbReference>
<dbReference type="GO" id="GO:0003886">
    <property type="term" value="F:DNA (cytosine-5-)-methyltransferase activity"/>
    <property type="evidence" value="ECO:0007669"/>
    <property type="project" value="UniProtKB-EC"/>
</dbReference>
<dbReference type="GO" id="GO:0003677">
    <property type="term" value="F:DNA binding"/>
    <property type="evidence" value="ECO:0007669"/>
    <property type="project" value="UniProtKB-KW"/>
</dbReference>
<dbReference type="GO" id="GO:0032259">
    <property type="term" value="P:methylation"/>
    <property type="evidence" value="ECO:0007669"/>
    <property type="project" value="UniProtKB-KW"/>
</dbReference>
<dbReference type="GO" id="GO:0099018">
    <property type="term" value="P:symbiont-mediated evasion of host restriction-modification system"/>
    <property type="evidence" value="ECO:0007669"/>
    <property type="project" value="UniProtKB-KW"/>
</dbReference>
<dbReference type="GO" id="GO:0052170">
    <property type="term" value="P:symbiont-mediated suppression of host innate immune response"/>
    <property type="evidence" value="ECO:0007669"/>
    <property type="project" value="UniProtKB-KW"/>
</dbReference>
<dbReference type="CDD" id="cd00315">
    <property type="entry name" value="Cyt_C5_DNA_methylase"/>
    <property type="match status" value="1"/>
</dbReference>
<dbReference type="Gene3D" id="3.90.120.10">
    <property type="entry name" value="DNA Methylase, subunit A, domain 2"/>
    <property type="match status" value="1"/>
</dbReference>
<dbReference type="Gene3D" id="3.40.50.150">
    <property type="entry name" value="Vaccinia Virus protein VP39"/>
    <property type="match status" value="1"/>
</dbReference>
<dbReference type="InterPro" id="IPR050750">
    <property type="entry name" value="C5-MTase"/>
</dbReference>
<dbReference type="InterPro" id="IPR018117">
    <property type="entry name" value="C5_DNA_meth_AS"/>
</dbReference>
<dbReference type="InterPro" id="IPR001525">
    <property type="entry name" value="C5_MeTfrase"/>
</dbReference>
<dbReference type="InterPro" id="IPR031303">
    <property type="entry name" value="C5_meth_CS"/>
</dbReference>
<dbReference type="InterPro" id="IPR029063">
    <property type="entry name" value="SAM-dependent_MTases_sf"/>
</dbReference>
<dbReference type="NCBIfam" id="TIGR00675">
    <property type="entry name" value="dcm"/>
    <property type="match status" value="1"/>
</dbReference>
<dbReference type="PANTHER" id="PTHR46098">
    <property type="entry name" value="TRNA (CYTOSINE(38)-C(5))-METHYLTRANSFERASE"/>
    <property type="match status" value="1"/>
</dbReference>
<dbReference type="PANTHER" id="PTHR46098:SF1">
    <property type="entry name" value="TRNA (CYTOSINE(38)-C(5))-METHYLTRANSFERASE"/>
    <property type="match status" value="1"/>
</dbReference>
<dbReference type="Pfam" id="PF00145">
    <property type="entry name" value="DNA_methylase"/>
    <property type="match status" value="1"/>
</dbReference>
<dbReference type="PRINTS" id="PR00105">
    <property type="entry name" value="C5METTRFRASE"/>
</dbReference>
<dbReference type="SUPFAM" id="SSF53335">
    <property type="entry name" value="S-adenosyl-L-methionine-dependent methyltransferases"/>
    <property type="match status" value="1"/>
</dbReference>
<dbReference type="PROSITE" id="PS00094">
    <property type="entry name" value="C5_MTASE_1"/>
    <property type="match status" value="1"/>
</dbReference>
<dbReference type="PROSITE" id="PS00095">
    <property type="entry name" value="C5_MTASE_2"/>
    <property type="match status" value="1"/>
</dbReference>
<dbReference type="PROSITE" id="PS51679">
    <property type="entry name" value="SAM_MT_C5"/>
    <property type="match status" value="1"/>
</dbReference>
<sequence length="439" mass="49881">MGKLRVMSLFSGIGAFEAALRNIGVGYELVGFSEIDKYAVKSFCAIHNVDEQLNFGDVSKIDKKKLPEFDLLVGGSPCQSFSVAGHRKGFEDTRGTLFFQYVETLKEKQPKFFVFENVKGLINHDKGNTLNVMAEAFSEVGYRIDLELLNSKFFNVPQNRERLYIIGIREDLIKNEEWSLDFKRKDILQKGKQRLVELDIKSFNFRWTAQSAATKRLKDLLEEYVDEKYYLNEDKTNSLIKELSTSRLNENLTVEQVGNINPSGNGMNGNVYNSSGLSPTITTNKGEGLKIAVEYSRKSGLGRELAVSHTLSASDWRGLNRNQKQNAVVEVRPVLTPERGEKRQNGRRFKDDGEPAFTVNTIDRHGVAVGEYPKYRIRRLTPLECFRLQAFDDEDFEKAFAAGISNSQLYKQTGNSITVTVLESIFKELIHTYINKESE</sequence>
<organismHost>
    <name type="scientific">Bacillus subtilis</name>
    <dbReference type="NCBI Taxonomy" id="1423"/>
</organismHost>
<reference key="1">
    <citation type="journal article" date="1984" name="Gene">
        <title>Restriction and modification in Bacillus subtilis: nucleotide sequence, functional organization and product of the DNA methyltransferase gene of bacteriophage SPR.</title>
        <authorList>
            <person name="Buhk H.-J."/>
            <person name="Behrens B."/>
            <person name="Tailor R."/>
            <person name="Wilke K."/>
            <person name="Prada J.J."/>
            <person name="Gunthert U."/>
            <person name="Noyer-Weidner M."/>
            <person name="Jentsch S."/>
            <person name="Trautner T.A."/>
        </authorList>
    </citation>
    <scope>NUCLEOTIDE SEQUENCE [GENOMIC DNA]</scope>
</reference>
<reference key="2">
    <citation type="journal article" date="1984" name="Nucleic Acids Res.">
        <title>Structure of the gene coding for the sequence-specific DNA-methyltransferase of the B. subtilis phage SPR.</title>
        <authorList>
            <person name="Posfai G."/>
            <person name="Baldauf F."/>
            <person name="Erdei S."/>
            <person name="Posfai J."/>
            <person name="Venetianer P."/>
            <person name="Kiss A."/>
        </authorList>
    </citation>
    <scope>NUCLEOTIDE SEQUENCE [GENOMIC DNA]</scope>
</reference>
<reference key="3">
    <citation type="journal article" date="2003" name="Nucleic Acids Res.">
        <title>A nomenclature for restriction enzymes, DNA methyltransferases, homing endonucleases and their genes.</title>
        <authorList>
            <person name="Roberts R.J."/>
            <person name="Belfort M."/>
            <person name="Bestor T."/>
            <person name="Bhagwat A.S."/>
            <person name="Bickle T.A."/>
            <person name="Bitinaite J."/>
            <person name="Blumenthal R.M."/>
            <person name="Degtyarev S.K."/>
            <person name="Dryden D.T."/>
            <person name="Dybvig K."/>
            <person name="Firman K."/>
            <person name="Gromova E.S."/>
            <person name="Gumport R.I."/>
            <person name="Halford S.E."/>
            <person name="Hattman S."/>
            <person name="Heitman J."/>
            <person name="Hornby D.P."/>
            <person name="Janulaitis A."/>
            <person name="Jeltsch A."/>
            <person name="Josephsen J."/>
            <person name="Kiss A."/>
            <person name="Klaenhammer T.R."/>
            <person name="Kobayashi I."/>
            <person name="Kong H."/>
            <person name="Krueger D.H."/>
            <person name="Lacks S."/>
            <person name="Marinus M.G."/>
            <person name="Miyahara M."/>
            <person name="Morgan R.D."/>
            <person name="Murray N.E."/>
            <person name="Nagaraja V."/>
            <person name="Piekarowicz A."/>
            <person name="Pingoud A."/>
            <person name="Raleigh E."/>
            <person name="Rao D.N."/>
            <person name="Reich N."/>
            <person name="Repin V.E."/>
            <person name="Selker E.U."/>
            <person name="Shaw P.C."/>
            <person name="Stein D.C."/>
            <person name="Stoddard B.L."/>
            <person name="Szybalski W."/>
            <person name="Trautner T.A."/>
            <person name="Van Etten J.L."/>
            <person name="Vitor J.M."/>
            <person name="Wilson G.G."/>
            <person name="Xu S.Y."/>
        </authorList>
    </citation>
    <scope>NOMENCLATURE</scope>
</reference>
<keyword id="KW-0238">DNA-binding</keyword>
<keyword id="KW-0945">Host-virus interaction</keyword>
<keyword id="KW-1090">Inhibition of host innate immune response by virus</keyword>
<keyword id="KW-0489">Methyltransferase</keyword>
<keyword id="KW-1258">Restriction-modification system evasion by virus</keyword>
<keyword id="KW-0949">S-adenosyl-L-methionine</keyword>
<keyword id="KW-0808">Transferase</keyword>
<keyword id="KW-0899">Viral immunoevasion</keyword>
<proteinExistence type="inferred from homology"/>
<feature type="chain" id="PRO_0000087868" description="Orphan methyltransferase M.SPRI">
    <location>
        <begin position="1"/>
        <end position="439"/>
    </location>
</feature>
<feature type="domain" description="SAM-dependent MTase C5-type" evidence="1">
    <location>
        <begin position="4"/>
        <end position="436"/>
    </location>
</feature>
<feature type="active site" evidence="1 2">
    <location>
        <position position="78"/>
    </location>
</feature>
<feature type="sequence conflict" description="In Ref. 2; AAA32604." evidence="4" ref="2">
    <original>T</original>
    <variation>A</variation>
    <location>
        <position position="413"/>
    </location>
</feature>
<feature type="sequence conflict" description="In Ref. 2; AAA32604." evidence="4" ref="2">
    <original>I</original>
    <variation>V</variation>
    <location>
        <position position="434"/>
    </location>
</feature>
<protein>
    <recommendedName>
        <fullName evidence="3">Orphan methyltransferase M.SPRI</fullName>
        <shortName evidence="3">M.SPRI</shortName>
        <ecNumber>2.1.1.37</ecNumber>
    </recommendedName>
    <alternativeName>
        <fullName>Cytosine-specific methyltransferase SPRI</fullName>
    </alternativeName>
    <alternativeName>
        <fullName>Modification methylase SPRI</fullName>
    </alternativeName>
</protein>